<dbReference type="EMBL" id="CP001197">
    <property type="protein sequence ID" value="ACL07340.1"/>
    <property type="molecule type" value="Genomic_DNA"/>
</dbReference>
<dbReference type="SMR" id="B8DJL8"/>
<dbReference type="STRING" id="883.DvMF_0383"/>
<dbReference type="KEGG" id="dvm:DvMF_0383"/>
<dbReference type="eggNOG" id="COG0782">
    <property type="taxonomic scope" value="Bacteria"/>
</dbReference>
<dbReference type="HOGENOM" id="CLU_101379_2_0_7"/>
<dbReference type="OrthoDB" id="9808774at2"/>
<dbReference type="GO" id="GO:0003677">
    <property type="term" value="F:DNA binding"/>
    <property type="evidence" value="ECO:0007669"/>
    <property type="project" value="UniProtKB-UniRule"/>
</dbReference>
<dbReference type="GO" id="GO:0070063">
    <property type="term" value="F:RNA polymerase binding"/>
    <property type="evidence" value="ECO:0007669"/>
    <property type="project" value="InterPro"/>
</dbReference>
<dbReference type="GO" id="GO:0006354">
    <property type="term" value="P:DNA-templated transcription elongation"/>
    <property type="evidence" value="ECO:0007669"/>
    <property type="project" value="TreeGrafter"/>
</dbReference>
<dbReference type="GO" id="GO:0032784">
    <property type="term" value="P:regulation of DNA-templated transcription elongation"/>
    <property type="evidence" value="ECO:0007669"/>
    <property type="project" value="UniProtKB-UniRule"/>
</dbReference>
<dbReference type="FunFam" id="1.10.287.180:FF:000001">
    <property type="entry name" value="Transcription elongation factor GreA"/>
    <property type="match status" value="1"/>
</dbReference>
<dbReference type="FunFam" id="3.10.50.30:FF:000001">
    <property type="entry name" value="Transcription elongation factor GreA"/>
    <property type="match status" value="1"/>
</dbReference>
<dbReference type="Gene3D" id="3.10.50.30">
    <property type="entry name" value="Transcription elongation factor, GreA/GreB, C-terminal domain"/>
    <property type="match status" value="1"/>
</dbReference>
<dbReference type="Gene3D" id="1.10.287.180">
    <property type="entry name" value="Transcription elongation factor, GreA/GreB, N-terminal domain"/>
    <property type="match status" value="1"/>
</dbReference>
<dbReference type="HAMAP" id="MF_00105">
    <property type="entry name" value="GreA_GreB"/>
    <property type="match status" value="1"/>
</dbReference>
<dbReference type="InterPro" id="IPR036953">
    <property type="entry name" value="GreA/GreB_C_sf"/>
</dbReference>
<dbReference type="InterPro" id="IPR018151">
    <property type="entry name" value="TF_GreA/GreB_CS"/>
</dbReference>
<dbReference type="InterPro" id="IPR006359">
    <property type="entry name" value="Tscrpt_elong_fac_GreA"/>
</dbReference>
<dbReference type="InterPro" id="IPR028624">
    <property type="entry name" value="Tscrpt_elong_fac_GreA/B"/>
</dbReference>
<dbReference type="InterPro" id="IPR001437">
    <property type="entry name" value="Tscrpt_elong_fac_GreA/B_C"/>
</dbReference>
<dbReference type="InterPro" id="IPR023459">
    <property type="entry name" value="Tscrpt_elong_fac_GreA/B_fam"/>
</dbReference>
<dbReference type="InterPro" id="IPR022691">
    <property type="entry name" value="Tscrpt_elong_fac_GreA/B_N"/>
</dbReference>
<dbReference type="InterPro" id="IPR036805">
    <property type="entry name" value="Tscrpt_elong_fac_GreA/B_N_sf"/>
</dbReference>
<dbReference type="NCBIfam" id="TIGR01462">
    <property type="entry name" value="greA"/>
    <property type="match status" value="1"/>
</dbReference>
<dbReference type="NCBIfam" id="NF001261">
    <property type="entry name" value="PRK00226.1-2"/>
    <property type="match status" value="1"/>
</dbReference>
<dbReference type="NCBIfam" id="NF001263">
    <property type="entry name" value="PRK00226.1-4"/>
    <property type="match status" value="1"/>
</dbReference>
<dbReference type="NCBIfam" id="NF001264">
    <property type="entry name" value="PRK00226.1-5"/>
    <property type="match status" value="1"/>
</dbReference>
<dbReference type="PANTHER" id="PTHR30437">
    <property type="entry name" value="TRANSCRIPTION ELONGATION FACTOR GREA"/>
    <property type="match status" value="1"/>
</dbReference>
<dbReference type="PANTHER" id="PTHR30437:SF4">
    <property type="entry name" value="TRANSCRIPTION ELONGATION FACTOR GREA"/>
    <property type="match status" value="1"/>
</dbReference>
<dbReference type="Pfam" id="PF01272">
    <property type="entry name" value="GreA_GreB"/>
    <property type="match status" value="1"/>
</dbReference>
<dbReference type="Pfam" id="PF03449">
    <property type="entry name" value="GreA_GreB_N"/>
    <property type="match status" value="1"/>
</dbReference>
<dbReference type="PIRSF" id="PIRSF006092">
    <property type="entry name" value="GreA_GreB"/>
    <property type="match status" value="1"/>
</dbReference>
<dbReference type="SUPFAM" id="SSF54534">
    <property type="entry name" value="FKBP-like"/>
    <property type="match status" value="1"/>
</dbReference>
<dbReference type="SUPFAM" id="SSF46557">
    <property type="entry name" value="GreA transcript cleavage protein, N-terminal domain"/>
    <property type="match status" value="1"/>
</dbReference>
<dbReference type="PROSITE" id="PS00829">
    <property type="entry name" value="GREAB_1"/>
    <property type="match status" value="1"/>
</dbReference>
<dbReference type="PROSITE" id="PS00830">
    <property type="entry name" value="GREAB_2"/>
    <property type="match status" value="1"/>
</dbReference>
<accession>B8DJL8</accession>
<protein>
    <recommendedName>
        <fullName evidence="1">Transcription elongation factor GreA</fullName>
    </recommendedName>
    <alternativeName>
        <fullName evidence="1">Transcript cleavage factor GreA</fullName>
    </alternativeName>
</protein>
<feature type="chain" id="PRO_1000117406" description="Transcription elongation factor GreA">
    <location>
        <begin position="1"/>
        <end position="160"/>
    </location>
</feature>
<feature type="coiled-coil region" evidence="1">
    <location>
        <begin position="11"/>
        <end position="38"/>
    </location>
</feature>
<proteinExistence type="inferred from homology"/>
<evidence type="ECO:0000255" key="1">
    <source>
        <dbReference type="HAMAP-Rule" id="MF_00105"/>
    </source>
</evidence>
<keyword id="KW-0175">Coiled coil</keyword>
<keyword id="KW-0238">DNA-binding</keyword>
<keyword id="KW-0804">Transcription</keyword>
<keyword id="KW-0805">Transcription regulation</keyword>
<reference key="1">
    <citation type="submission" date="2008-10" db="EMBL/GenBank/DDBJ databases">
        <title>Complete sequence of Desulfovibrio vulgaris str. 'Miyazaki F'.</title>
        <authorList>
            <person name="Lucas S."/>
            <person name="Copeland A."/>
            <person name="Lapidus A."/>
            <person name="Glavina del Rio T."/>
            <person name="Dalin E."/>
            <person name="Tice H."/>
            <person name="Bruce D."/>
            <person name="Goodwin L."/>
            <person name="Pitluck S."/>
            <person name="Sims D."/>
            <person name="Brettin T."/>
            <person name="Detter J.C."/>
            <person name="Han C."/>
            <person name="Larimer F."/>
            <person name="Land M."/>
            <person name="Hauser L."/>
            <person name="Kyrpides N."/>
            <person name="Mikhailova N."/>
            <person name="Hazen T.C."/>
            <person name="Richardson P."/>
        </authorList>
    </citation>
    <scope>NUCLEOTIDE SEQUENCE [LARGE SCALE GENOMIC DNA]</scope>
    <source>
        <strain>DSM 19637 / Miyazaki F</strain>
    </source>
</reference>
<comment type="function">
    <text evidence="1">Necessary for efficient RNA polymerase transcription elongation past template-encoded arresting sites. The arresting sites in DNA have the property of trapping a certain fraction of elongating RNA polymerases that pass through, resulting in locked ternary complexes. Cleavage of the nascent transcript by cleavage factors such as GreA or GreB allows the resumption of elongation from the new 3'terminus. GreA releases sequences of 2 to 3 nucleotides.</text>
</comment>
<comment type="similarity">
    <text evidence="1">Belongs to the GreA/GreB family.</text>
</comment>
<name>GREA_NITV9</name>
<gene>
    <name evidence="1" type="primary">greA</name>
    <name type="ordered locus">DvMF_0383</name>
</gene>
<sequence>MSSIPISTEGYDRLMKELERLKSERPAIIQAIKEAREEGDLKENAGYDAARERQGMLEARISYIESRMAQFNVINLDSLSGDKVMFGATVEIEDLDSGEAKRYTLLGPDEADYAQGTISVLSPVARALLGKEEGDEIVVDAPRGRISYEIISVAFEGARR</sequence>
<organism>
    <name type="scientific">Nitratidesulfovibrio vulgaris (strain DSM 19637 / Miyazaki F)</name>
    <name type="common">Desulfovibrio vulgaris</name>
    <dbReference type="NCBI Taxonomy" id="883"/>
    <lineage>
        <taxon>Bacteria</taxon>
        <taxon>Pseudomonadati</taxon>
        <taxon>Thermodesulfobacteriota</taxon>
        <taxon>Desulfovibrionia</taxon>
        <taxon>Desulfovibrionales</taxon>
        <taxon>Desulfovibrionaceae</taxon>
        <taxon>Nitratidesulfovibrio</taxon>
    </lineage>
</organism>